<gene>
    <name type="primary">snrpa</name>
</gene>
<organism>
    <name type="scientific">Xenopus laevis</name>
    <name type="common">African clawed frog</name>
    <dbReference type="NCBI Taxonomy" id="8355"/>
    <lineage>
        <taxon>Eukaryota</taxon>
        <taxon>Metazoa</taxon>
        <taxon>Chordata</taxon>
        <taxon>Craniata</taxon>
        <taxon>Vertebrata</taxon>
        <taxon>Euteleostomi</taxon>
        <taxon>Amphibia</taxon>
        <taxon>Batrachia</taxon>
        <taxon>Anura</taxon>
        <taxon>Pipoidea</taxon>
        <taxon>Pipidae</taxon>
        <taxon>Xenopodinae</taxon>
        <taxon>Xenopus</taxon>
        <taxon>Xenopus</taxon>
    </lineage>
</organism>
<comment type="function">
    <text evidence="1">Component of the spliceosomal U1 snRNP, which is essential for recognition of the pre-mRNA 5' splice-site and the subsequent assembly of the spliceosome. U1 snRNP is the first snRNP to interact with pre-mRNA. This interaction is required for the subsequent binding of U2 snRNP and the U4/U6/U5 tri-snRNP. Snrpa binds stem loop II of U1 snRNA (By similarity).</text>
</comment>
<comment type="subunit">
    <text evidence="1">U1 snRNP is composed of the 7 core Sm proteins snrpb, snrpd1, snrpd2, snrpd3, snrpe, snrpf and snrpg that assemble in a heptameric protein ring on the Sm site of the small nuclear RNA to form the core snRNP, and at least three U1 snRNP-specific proteins snrnp70/U1-70K, snrpa/U1-A and snrpc/U1-C.</text>
</comment>
<comment type="subcellular location">
    <subcellularLocation>
        <location>Nucleus</location>
    </subcellularLocation>
</comment>
<comment type="similarity">
    <text evidence="3">Belongs to the RRM U1 A/B'' family.</text>
</comment>
<name>SNRPA_XENLA</name>
<protein>
    <recommendedName>
        <fullName>U1 small nuclear ribonucleoprotein A</fullName>
        <shortName>U1 snRNP A</shortName>
        <shortName>U1-A</shortName>
        <shortName>U1A</shortName>
    </recommendedName>
</protein>
<proteinExistence type="evidence at transcript level"/>
<sequence length="282" mass="31610">MSIQEVRPNNTIYINNLNEKIKKDELKKSLYAIFSQFGQILDILVSRNLKMRGQAFVIFKETSSATNALRSMQGFPFYDKPMRIQYSKTDSDIIAKMKGTFVERDRKRQEKRKVKVPEVQGVKNAMPGAALLPGVPGQMAAMQDMPGMTQAPRMMHMAGQAPYMHHPGMMPPPGMAPGQMPPGGMPHGQLMPGQMAPMQPISENPPNHILFLTNLPEETNELMLSMLFNQFPGFKEVRLVPGRHDIAFVEFDNEVQAGAARESLQGFKITQSNSMKISFAKK</sequence>
<reference key="1">
    <citation type="journal article" date="1991" name="J. Mol. Biol.">
        <title>Conserved amino acid residues within and outside of the N-terminal ribonucleoprotein motif of U1A small nuclear ribonucleoprotein involved in U1 RNA binding.</title>
        <authorList>
            <person name="Scherly D."/>
            <person name="Kambach C."/>
            <person name="Boelens W."/>
            <person name="van Venrooij W.J."/>
            <person name="Mattaj I.W."/>
        </authorList>
    </citation>
    <scope>NUCLEOTIDE SEQUENCE [MRNA]</scope>
</reference>
<keyword id="KW-0507">mRNA processing</keyword>
<keyword id="KW-0508">mRNA splicing</keyword>
<keyword id="KW-0539">Nucleus</keyword>
<keyword id="KW-1185">Reference proteome</keyword>
<keyword id="KW-0677">Repeat</keyword>
<keyword id="KW-0687">Ribonucleoprotein</keyword>
<keyword id="KW-0694">RNA-binding</keyword>
<keyword id="KW-0747">Spliceosome</keyword>
<feature type="chain" id="PRO_0000081889" description="U1 small nuclear ribonucleoprotein A">
    <location>
        <begin position="1"/>
        <end position="282"/>
    </location>
</feature>
<feature type="domain" description="RRM 1" evidence="2">
    <location>
        <begin position="10"/>
        <end position="89"/>
    </location>
</feature>
<feature type="domain" description="RRM 2" evidence="2">
    <location>
        <begin position="208"/>
        <end position="282"/>
    </location>
</feature>
<accession>P45429</accession>
<evidence type="ECO:0000250" key="1"/>
<evidence type="ECO:0000255" key="2">
    <source>
        <dbReference type="PROSITE-ProRule" id="PRU00176"/>
    </source>
</evidence>
<evidence type="ECO:0000305" key="3"/>
<dbReference type="EMBL" id="X57953">
    <property type="protein sequence ID" value="CAA41021.1"/>
    <property type="molecule type" value="mRNA"/>
</dbReference>
<dbReference type="PIR" id="S30564">
    <property type="entry name" value="S30564"/>
</dbReference>
<dbReference type="SMR" id="P45429"/>
<dbReference type="AGR" id="Xenbase:XB-GENE-6254943"/>
<dbReference type="Xenbase" id="XB-GENE-6254943">
    <property type="gene designation" value="snrpa.S"/>
</dbReference>
<dbReference type="Proteomes" id="UP000186698">
    <property type="component" value="Unplaced"/>
</dbReference>
<dbReference type="GO" id="GO:0005681">
    <property type="term" value="C:spliceosomal complex"/>
    <property type="evidence" value="ECO:0007669"/>
    <property type="project" value="UniProtKB-KW"/>
</dbReference>
<dbReference type="GO" id="GO:0005685">
    <property type="term" value="C:U1 snRNP"/>
    <property type="evidence" value="ECO:0000250"/>
    <property type="project" value="UniProtKB"/>
</dbReference>
<dbReference type="GO" id="GO:0030619">
    <property type="term" value="F:U1 snRNA binding"/>
    <property type="evidence" value="ECO:0000250"/>
    <property type="project" value="UniProtKB"/>
</dbReference>
<dbReference type="GO" id="GO:0000398">
    <property type="term" value="P:mRNA splicing, via spliceosome"/>
    <property type="evidence" value="ECO:0000318"/>
    <property type="project" value="GO_Central"/>
</dbReference>
<dbReference type="CDD" id="cd12477">
    <property type="entry name" value="RRM1_U1A"/>
    <property type="match status" value="1"/>
</dbReference>
<dbReference type="CDD" id="cd12480">
    <property type="entry name" value="RRM2_U1A"/>
    <property type="match status" value="1"/>
</dbReference>
<dbReference type="FunFam" id="3.30.70.330:FF:000039">
    <property type="entry name" value="U1 small nuclear ribonucleoprotein A"/>
    <property type="match status" value="1"/>
</dbReference>
<dbReference type="FunFam" id="3.30.70.330:FF:000029">
    <property type="entry name" value="U2 small nuclear ribonucleoprotein B"/>
    <property type="match status" value="1"/>
</dbReference>
<dbReference type="Gene3D" id="3.30.70.330">
    <property type="match status" value="2"/>
</dbReference>
<dbReference type="InterPro" id="IPR012677">
    <property type="entry name" value="Nucleotide-bd_a/b_plait_sf"/>
</dbReference>
<dbReference type="InterPro" id="IPR035979">
    <property type="entry name" value="RBD_domain_sf"/>
</dbReference>
<dbReference type="InterPro" id="IPR000504">
    <property type="entry name" value="RRM_dom"/>
</dbReference>
<dbReference type="InterPro" id="IPR034407">
    <property type="entry name" value="U1A_RRM1"/>
</dbReference>
<dbReference type="InterPro" id="IPR034409">
    <property type="entry name" value="U1A_RRM2"/>
</dbReference>
<dbReference type="PANTHER" id="PTHR10501">
    <property type="entry name" value="U1 SMALL NUCLEAR RIBONUCLEOPROTEIN A/U2 SMALL NUCLEAR RIBONUCLEOPROTEIN B"/>
    <property type="match status" value="1"/>
</dbReference>
<dbReference type="Pfam" id="PF00076">
    <property type="entry name" value="RRM_1"/>
    <property type="match status" value="2"/>
</dbReference>
<dbReference type="SMART" id="SM00360">
    <property type="entry name" value="RRM"/>
    <property type="match status" value="2"/>
</dbReference>
<dbReference type="SUPFAM" id="SSF54928">
    <property type="entry name" value="RNA-binding domain, RBD"/>
    <property type="match status" value="1"/>
</dbReference>
<dbReference type="PROSITE" id="PS50102">
    <property type="entry name" value="RRM"/>
    <property type="match status" value="2"/>
</dbReference>